<proteinExistence type="inferred from homology"/>
<keyword id="KW-0535">Nitrogen fixation</keyword>
<keyword id="KW-0614">Plasmid</keyword>
<keyword id="KW-1185">Reference proteome</keyword>
<feature type="chain" id="PRO_0000200963" description="UPF0437 protein y4xE">
    <location>
        <begin position="1"/>
        <end position="67"/>
    </location>
</feature>
<sequence>MTDLEELKQRVQKLQSRAATAKTQLHDLAECLPNYWTEIVAVAEKTFDAFAQLDAAKRELAASENSR</sequence>
<gene>
    <name type="ordered locus">NGR_a00850</name>
    <name type="ORF">y4xE</name>
</gene>
<name>Y4XE_SINFN</name>
<evidence type="ECO:0000305" key="1"/>
<comment type="similarity">
    <text evidence="1">Belongs to the UPF0437 family.</text>
</comment>
<geneLocation type="plasmid">
    <name>sym pNGR234a</name>
</geneLocation>
<organism>
    <name type="scientific">Sinorhizobium fredii (strain NBRC 101917 / NGR234)</name>
    <dbReference type="NCBI Taxonomy" id="394"/>
    <lineage>
        <taxon>Bacteria</taxon>
        <taxon>Pseudomonadati</taxon>
        <taxon>Pseudomonadota</taxon>
        <taxon>Alphaproteobacteria</taxon>
        <taxon>Hyphomicrobiales</taxon>
        <taxon>Rhizobiaceae</taxon>
        <taxon>Sinorhizobium/Ensifer group</taxon>
        <taxon>Sinorhizobium</taxon>
    </lineage>
</organism>
<dbReference type="EMBL" id="U00090">
    <property type="protein sequence ID" value="AAB91927.1"/>
    <property type="molecule type" value="Genomic_DNA"/>
</dbReference>
<dbReference type="PIR" id="T10832">
    <property type="entry name" value="T10832"/>
</dbReference>
<dbReference type="RefSeq" id="NP_444140.1">
    <property type="nucleotide sequence ID" value="NC_000914.2"/>
</dbReference>
<dbReference type="RefSeq" id="WP_010875126.1">
    <property type="nucleotide sequence ID" value="NC_000914.2"/>
</dbReference>
<dbReference type="SMR" id="P55696"/>
<dbReference type="KEGG" id="rhi:NGR_a00850"/>
<dbReference type="PATRIC" id="fig|394.7.peg.74"/>
<dbReference type="eggNOG" id="COG5420">
    <property type="taxonomic scope" value="Bacteria"/>
</dbReference>
<dbReference type="HOGENOM" id="CLU_187695_0_1_5"/>
<dbReference type="OrthoDB" id="3216579at2"/>
<dbReference type="Proteomes" id="UP000001054">
    <property type="component" value="Plasmid pNGR234a"/>
</dbReference>
<dbReference type="GO" id="GO:0009399">
    <property type="term" value="P:nitrogen fixation"/>
    <property type="evidence" value="ECO:0007669"/>
    <property type="project" value="UniProtKB-KW"/>
</dbReference>
<dbReference type="Gene3D" id="1.10.287.660">
    <property type="entry name" value="Helix hairpin bin"/>
    <property type="match status" value="1"/>
</dbReference>
<dbReference type="InterPro" id="IPR029012">
    <property type="entry name" value="Helix_hairpin_bin_sf"/>
</dbReference>
<dbReference type="InterPro" id="IPR007774">
    <property type="entry name" value="Put_N_fixation"/>
</dbReference>
<dbReference type="Pfam" id="PF05082">
    <property type="entry name" value="Rop-like"/>
    <property type="match status" value="1"/>
</dbReference>
<dbReference type="PIRSF" id="PIRSF037676">
    <property type="entry name" value="DUF683"/>
    <property type="match status" value="1"/>
</dbReference>
<protein>
    <recommendedName>
        <fullName>UPF0437 protein y4xE</fullName>
    </recommendedName>
</protein>
<accession>P55696</accession>
<reference key="1">
    <citation type="journal article" date="1997" name="Nature">
        <title>Molecular basis of symbiosis between Rhizobium and legumes.</title>
        <authorList>
            <person name="Freiberg C.A."/>
            <person name="Fellay R."/>
            <person name="Bairoch A."/>
            <person name="Broughton W.J."/>
            <person name="Rosenthal A."/>
            <person name="Perret X."/>
        </authorList>
    </citation>
    <scope>NUCLEOTIDE SEQUENCE [LARGE SCALE GENOMIC DNA]</scope>
    <source>
        <strain>NBRC 101917 / NGR234</strain>
    </source>
</reference>
<reference key="2">
    <citation type="journal article" date="2009" name="Appl. Environ. Microbiol.">
        <title>Rhizobium sp. strain NGR234 possesses a remarkable number of secretion systems.</title>
        <authorList>
            <person name="Schmeisser C."/>
            <person name="Liesegang H."/>
            <person name="Krysciak D."/>
            <person name="Bakkou N."/>
            <person name="Le Quere A."/>
            <person name="Wollherr A."/>
            <person name="Heinemeyer I."/>
            <person name="Morgenstern B."/>
            <person name="Pommerening-Roeser A."/>
            <person name="Flores M."/>
            <person name="Palacios R."/>
            <person name="Brenner S."/>
            <person name="Gottschalk G."/>
            <person name="Schmitz R.A."/>
            <person name="Broughton W.J."/>
            <person name="Perret X."/>
            <person name="Strittmatter A.W."/>
            <person name="Streit W.R."/>
        </authorList>
    </citation>
    <scope>NUCLEOTIDE SEQUENCE [LARGE SCALE GENOMIC DNA]</scope>
    <source>
        <strain>NBRC 101917 / NGR234</strain>
    </source>
</reference>